<keyword id="KW-1003">Cell membrane</keyword>
<keyword id="KW-0325">Glycoprotein</keyword>
<keyword id="KW-0472">Membrane</keyword>
<keyword id="KW-1185">Reference proteome</keyword>
<keyword id="KW-0769">Symport</keyword>
<keyword id="KW-0812">Transmembrane</keyword>
<keyword id="KW-1133">Transmembrane helix</keyword>
<keyword id="KW-0813">Transport</keyword>
<sequence>MADNTQRQRESISLTPMAHGLENMGAEFLESMEEGRLPHSHSSLPEGEGGLNKAERKAFSRWRSLQPTVQARSFCREHRQLFGWICKGLLSTACLGFLMVACLLDLQRALALLIITCVVLVFLAYDLLKRLLGSKLRRCVKFQGHSCLSLWLKRGLALAAGVGLILWLSLDTAQRPEQLVSFAGICVFLVLLFAGSKHHRAVSWRAVSWGLGLQFVLGLFVIRTEPGFIAFQWLGDQIQVFLSYTEAGSSFVFGEALVKDVFAFQVLPIIIFFSCVMSVLYYLGLMQWVILKIAWLMQVTMGTSATETLSVAGNIFVSQTEAPLLIRPYLADMTLSEVHVVMTGGYATIAGSLLGAYISFGIDAASLIAASVMAAPCALALSKLVYPEVEESKFRSENGVKLTYGDAQNLLEAASAGAAISVKVVANIAANLIAFLAVLAFVNAALSWLGDMVDIQGLSFQLICSYVLRPVAFLMGVAWEDCPVVAELLGIKFFLNEFVAYQELSQYKQRRLAGAEEWLGDKKQWISVRAEILTTYALCGFANFSSIGIMLGGLTSLVPQRRSDFSQIVLRALITGAFVSLLNACVAGILYVPRGVEVDCVSLLNQTVSSSSFEVYLCCRQVFQSTSSEFSQVALDNCCRFYNHTVCT</sequence>
<accession>Q62674</accession>
<organism>
    <name type="scientific">Rattus norvegicus</name>
    <name type="common">Rat</name>
    <dbReference type="NCBI Taxonomy" id="10116"/>
    <lineage>
        <taxon>Eukaryota</taxon>
        <taxon>Metazoa</taxon>
        <taxon>Chordata</taxon>
        <taxon>Craniata</taxon>
        <taxon>Vertebrata</taxon>
        <taxon>Euteleostomi</taxon>
        <taxon>Mammalia</taxon>
        <taxon>Eutheria</taxon>
        <taxon>Euarchontoglires</taxon>
        <taxon>Glires</taxon>
        <taxon>Rodentia</taxon>
        <taxon>Myomorpha</taxon>
        <taxon>Muroidea</taxon>
        <taxon>Muridae</taxon>
        <taxon>Murinae</taxon>
        <taxon>Rattus</taxon>
    </lineage>
</organism>
<reference key="1">
    <citation type="journal article" date="1994" name="J. Biol. Chem.">
        <title>Cloning and functional expression of a complementary DNA encoding a mammalian nucleoside transport protein.</title>
        <authorList>
            <person name="Huang Q.-Q."/>
            <person name="Yao S.Y.M."/>
            <person name="Ritzel M.W.L."/>
            <person name="Paterson A.R.P."/>
            <person name="Cass C.E."/>
            <person name="Young J.D."/>
        </authorList>
    </citation>
    <scope>NUCLEOTIDE SEQUENCE [MRNA]</scope>
    <scope>FUNCTION</scope>
    <scope>TRANSPORTER ACTIVITY</scope>
    <scope>SUBCELLULAR LOCATION</scope>
    <source>
        <strain>Sprague-Dawley</strain>
        <tissue>Jejunum</tissue>
    </source>
</reference>
<reference key="2">
    <citation type="journal article" date="1996" name="Mol. Pharmacol.">
        <title>Transport of adenosine by recombinant purine- and pyrimidine-selective sodium/nucleoside cotransporters from rat jejunum expressed in Xenopus laevis oocytes.</title>
        <authorList>
            <person name="Yao S.Y."/>
            <person name="Ng A.M."/>
            <person name="Ritzel M.W."/>
            <person name="Gati W.P."/>
            <person name="Cass C.E."/>
            <person name="Young J.D."/>
        </authorList>
    </citation>
    <scope>FUNCTION</scope>
    <scope>TRANSPORTER ACTIVITY</scope>
    <scope>SUBCELLULAR LOCATION</scope>
</reference>
<reference key="3">
    <citation type="journal article" date="2001" name="J. Biol. Chem.">
        <title>Subcellular distribution and membrane topology of the mammalian concentrative Na+-nucleoside cotransporter rCNT1.</title>
        <authorList>
            <person name="Hamilton S.R."/>
            <person name="Yao S.Y."/>
            <person name="Ingram J.C."/>
            <person name="Hadden D.A."/>
            <person name="Ritzel M.W."/>
            <person name="Gallagher M.P."/>
            <person name="Henderson P.J."/>
            <person name="Cass C.E."/>
            <person name="Young J.D."/>
            <person name="Baldwin S.A."/>
        </authorList>
    </citation>
    <scope>TOPOLOGY</scope>
    <scope>SUBCELLULAR LOCATION</scope>
    <scope>TISSUE SPECIFICITY</scope>
    <scope>GLYCOSYLATION AT ASN-605 AND ASN-643</scope>
</reference>
<evidence type="ECO:0000250" key="1">
    <source>
        <dbReference type="UniProtKB" id="O00337"/>
    </source>
</evidence>
<evidence type="ECO:0000255" key="2"/>
<evidence type="ECO:0000269" key="3">
    <source>
    </source>
</evidence>
<evidence type="ECO:0000269" key="4">
    <source>
    </source>
</evidence>
<evidence type="ECO:0000269" key="5">
    <source>
    </source>
</evidence>
<evidence type="ECO:0000303" key="6">
    <source>
    </source>
</evidence>
<evidence type="ECO:0000305" key="7"/>
<evidence type="ECO:0000305" key="8">
    <source>
    </source>
</evidence>
<evidence type="ECO:0000312" key="9">
    <source>
        <dbReference type="RGD" id="621223"/>
    </source>
</evidence>
<feature type="chain" id="PRO_0000070449" description="Sodium/nucleoside cotransporter 1">
    <location>
        <begin position="1"/>
        <end position="648"/>
    </location>
</feature>
<feature type="topological domain" description="Cytoplasmic" evidence="3">
    <location>
        <begin position="1"/>
        <end position="80"/>
    </location>
</feature>
<feature type="transmembrane region" description="Helical" evidence="2">
    <location>
        <begin position="81"/>
        <end position="104"/>
    </location>
</feature>
<feature type="topological domain" description="Extracellular" evidence="3">
    <location>
        <begin position="105"/>
        <end position="109"/>
    </location>
</feature>
<feature type="transmembrane region" description="Helical" evidence="2">
    <location>
        <begin position="110"/>
        <end position="128"/>
    </location>
</feature>
<feature type="topological domain" description="Cytoplasmic" evidence="3">
    <location>
        <begin position="129"/>
        <end position="147"/>
    </location>
</feature>
<feature type="transmembrane region" description="Helical" evidence="2">
    <location>
        <begin position="148"/>
        <end position="167"/>
    </location>
</feature>
<feature type="topological domain" description="Extracellular" evidence="3">
    <location>
        <begin position="168"/>
        <end position="178"/>
    </location>
</feature>
<feature type="transmembrane region" description="Helical" evidence="2">
    <location>
        <begin position="179"/>
        <end position="195"/>
    </location>
</feature>
<feature type="topological domain" description="Cytoplasmic" evidence="3">
    <location>
        <begin position="196"/>
        <end position="201"/>
    </location>
</feature>
<feature type="transmembrane region" description="Helical" evidence="2">
    <location>
        <begin position="202"/>
        <end position="222"/>
    </location>
</feature>
<feature type="topological domain" description="Extracellular" evidence="3">
    <location>
        <begin position="223"/>
        <end position="261"/>
    </location>
</feature>
<feature type="transmembrane region" description="Helical" evidence="2">
    <location>
        <begin position="262"/>
        <end position="283"/>
    </location>
</feature>
<feature type="topological domain" description="Cytoplasmic" evidence="3">
    <location>
        <begin position="284"/>
        <end position="294"/>
    </location>
</feature>
<feature type="transmembrane region" description="Helical" evidence="2">
    <location>
        <begin position="295"/>
        <end position="318"/>
    </location>
</feature>
<feature type="topological domain" description="Extracellular" evidence="3">
    <location>
        <begin position="319"/>
        <end position="337"/>
    </location>
</feature>
<feature type="transmembrane region" description="Helical" evidence="2">
    <location>
        <begin position="338"/>
        <end position="360"/>
    </location>
</feature>
<feature type="topological domain" description="Cytoplasmic" evidence="3">
    <location>
        <begin position="361"/>
        <end position="366"/>
    </location>
</feature>
<feature type="transmembrane region" description="Helical" evidence="2">
    <location>
        <begin position="367"/>
        <end position="386"/>
    </location>
</feature>
<feature type="topological domain" description="Extracellular" evidence="3">
    <location>
        <begin position="387"/>
        <end position="423"/>
    </location>
</feature>
<feature type="transmembrane region" description="Helical" evidence="2">
    <location>
        <begin position="424"/>
        <end position="446"/>
    </location>
</feature>
<feature type="topological domain" description="Cytoplasmic" evidence="3">
    <location>
        <begin position="447"/>
        <end position="457"/>
    </location>
</feature>
<feature type="transmembrane region" description="Helical" evidence="2">
    <location>
        <begin position="458"/>
        <end position="479"/>
    </location>
</feature>
<feature type="topological domain" description="Extracellular" evidence="3">
    <location>
        <begin position="480"/>
        <end position="534"/>
    </location>
</feature>
<feature type="transmembrane region" description="Helical" evidence="2">
    <location>
        <begin position="535"/>
        <end position="558"/>
    </location>
</feature>
<feature type="topological domain" description="Cytoplasmic" evidence="3">
    <location>
        <begin position="559"/>
        <end position="569"/>
    </location>
</feature>
<feature type="transmembrane region" description="Helical" evidence="2">
    <location>
        <begin position="570"/>
        <end position="592"/>
    </location>
</feature>
<feature type="topological domain" description="Extracellular" evidence="3">
    <location>
        <begin position="593"/>
        <end position="648"/>
    </location>
</feature>
<feature type="glycosylation site" description="N-linked (GlcNAc...) asparagine" evidence="3">
    <location>
        <position position="605"/>
    </location>
</feature>
<feature type="glycosylation site" description="N-linked (GlcNAc...) asparagine" evidence="3">
    <location>
        <position position="643"/>
    </location>
</feature>
<name>S28A1_RAT</name>
<gene>
    <name evidence="9" type="primary">Slc28a1</name>
    <name evidence="6" type="synonym">Cnt1</name>
</gene>
<protein>
    <recommendedName>
        <fullName evidence="8">Sodium/nucleoside cotransporter 1</fullName>
    </recommendedName>
    <alternativeName>
        <fullName evidence="6">Concentrative nucleoside transporter 1</fullName>
        <shortName evidence="6">CNT 1</shortName>
    </alternativeName>
    <alternativeName>
        <fullName evidence="6">Na(+)/nucleoside cotransporter 1</fullName>
    </alternativeName>
    <alternativeName>
        <fullName>Sodium-coupled nucleoside transporter 1</fullName>
    </alternativeName>
    <alternativeName>
        <fullName evidence="9">Solute carrier family 28 member 1</fullName>
    </alternativeName>
</protein>
<comment type="function">
    <text evidence="1 4 5">Sodium and pyrimidine nucleoside symporter of the plasma membrane that imports uridine, thymidine and cytidine into cells by coupling their transport to the transmembrane sodium electrochemical gradient. Also transports adenosine, an atypical substrate transported with high apparent affinity, but low maximum velocity. Therefore, exhibits the transport characteristics of the nucleoside transport system cit or N2 subtype (N2/cit) (PubMed:8027026, PubMed:8967974). Involved in renal nucleoside (re)absorption (By similarity).</text>
</comment>
<comment type="catalytic activity">
    <reaction evidence="4">
        <text>uridine(out) + Na(+)(out) = uridine(in) + Na(+)(in)</text>
        <dbReference type="Rhea" id="RHEA:69887"/>
        <dbReference type="ChEBI" id="CHEBI:16704"/>
        <dbReference type="ChEBI" id="CHEBI:29101"/>
    </reaction>
</comment>
<comment type="catalytic activity">
    <reaction evidence="4">
        <text>thymidine(out) + Na(+)(out) = thymidine(in) + Na(+)(in)</text>
        <dbReference type="Rhea" id="RHEA:69891"/>
        <dbReference type="ChEBI" id="CHEBI:17748"/>
        <dbReference type="ChEBI" id="CHEBI:29101"/>
    </reaction>
</comment>
<comment type="catalytic activity">
    <reaction evidence="4">
        <text>cytidine(out) + Na(+)(out) = cytidine(in) + Na(+)(in)</text>
        <dbReference type="Rhea" id="RHEA:69895"/>
        <dbReference type="ChEBI" id="CHEBI:17562"/>
        <dbReference type="ChEBI" id="CHEBI:29101"/>
    </reaction>
</comment>
<comment type="catalytic activity">
    <reaction evidence="4 5">
        <text>adenosine(out) + Na(+)(out) = adenosine(in) + Na(+)(in)</text>
        <dbReference type="Rhea" id="RHEA:69927"/>
        <dbReference type="ChEBI" id="CHEBI:16335"/>
        <dbReference type="ChEBI" id="CHEBI:29101"/>
    </reaction>
</comment>
<comment type="activity regulation">
    <text evidence="1">Due to its high apparent affinity but slow transport, adenosine could act as a negative regulator of pyrimidine transport under some conditions.</text>
</comment>
<comment type="subcellular location">
    <subcellularLocation>
        <location evidence="3 4 5">Cell membrane</location>
        <topology evidence="3">Multi-pass membrane protein</topology>
    </subcellularLocation>
    <subcellularLocation>
        <location evidence="1">Apical cell membrane</location>
        <topology evidence="3">Multi-pass membrane protein</topology>
    </subcellularLocation>
</comment>
<comment type="tissue specificity">
    <text evidence="3">Expressed predominantly in the brush-border membranes of the polarized epithelial cells of jejunum and renal cortical tubules and in the bile canalicular membranes of liver parenchymal cells.</text>
</comment>
<comment type="PTM">
    <text evidence="3">N-glycosylated. N-glycosylation is required for localization to the plasma membrane and the transporter activity.</text>
</comment>
<comment type="similarity">
    <text evidence="7">Belongs to the concentrative nucleoside transporter (CNT) (TC 2.A.41) family.</text>
</comment>
<proteinExistence type="evidence at protein level"/>
<dbReference type="EMBL" id="U10279">
    <property type="protein sequence ID" value="AAB03626.1"/>
    <property type="molecule type" value="mRNA"/>
</dbReference>
<dbReference type="PIR" id="A54892">
    <property type="entry name" value="A54892"/>
</dbReference>
<dbReference type="RefSeq" id="NP_446315.1">
    <property type="nucleotide sequence ID" value="NM_053863.1"/>
</dbReference>
<dbReference type="SMR" id="Q62674"/>
<dbReference type="FunCoup" id="Q62674">
    <property type="interactions" value="1"/>
</dbReference>
<dbReference type="STRING" id="10116.ENSRNOP00000070095"/>
<dbReference type="ChEMBL" id="CHEMBL1287615"/>
<dbReference type="TCDB" id="2.A.41.2.2">
    <property type="family name" value="the concentrative nucleoside transporter (cnt) family"/>
</dbReference>
<dbReference type="GlyCosmos" id="Q62674">
    <property type="glycosylation" value="2 sites, No reported glycans"/>
</dbReference>
<dbReference type="GlyGen" id="Q62674">
    <property type="glycosylation" value="2 sites"/>
</dbReference>
<dbReference type="iPTMnet" id="Q62674"/>
<dbReference type="PhosphoSitePlus" id="Q62674"/>
<dbReference type="PaxDb" id="10116-ENSRNOP00000025621"/>
<dbReference type="GeneID" id="116642"/>
<dbReference type="KEGG" id="rno:116642"/>
<dbReference type="AGR" id="RGD:621223"/>
<dbReference type="CTD" id="9154"/>
<dbReference type="RGD" id="621223">
    <property type="gene designation" value="Slc28a1"/>
</dbReference>
<dbReference type="eggNOG" id="KOG3747">
    <property type="taxonomic scope" value="Eukaryota"/>
</dbReference>
<dbReference type="InParanoid" id="Q62674"/>
<dbReference type="OrthoDB" id="6075923at2759"/>
<dbReference type="PhylomeDB" id="Q62674"/>
<dbReference type="Reactome" id="R-RNO-83936">
    <property type="pathway name" value="Transport of nucleosides and free purine and pyrimidine bases across the plasma membrane"/>
</dbReference>
<dbReference type="PRO" id="PR:Q62674"/>
<dbReference type="Proteomes" id="UP000002494">
    <property type="component" value="Unplaced"/>
</dbReference>
<dbReference type="GO" id="GO:0016324">
    <property type="term" value="C:apical plasma membrane"/>
    <property type="evidence" value="ECO:0000314"/>
    <property type="project" value="RGD"/>
</dbReference>
<dbReference type="GO" id="GO:0031526">
    <property type="term" value="C:brush border membrane"/>
    <property type="evidence" value="ECO:0000266"/>
    <property type="project" value="RGD"/>
</dbReference>
<dbReference type="GO" id="GO:0005886">
    <property type="term" value="C:plasma membrane"/>
    <property type="evidence" value="ECO:0000314"/>
    <property type="project" value="UniProtKB"/>
</dbReference>
<dbReference type="GO" id="GO:1901474">
    <property type="term" value="F:azole transmembrane transporter activity"/>
    <property type="evidence" value="ECO:0000266"/>
    <property type="project" value="RGD"/>
</dbReference>
<dbReference type="GO" id="GO:0005350">
    <property type="term" value="F:pyrimidine nucleobase transmembrane transporter activity"/>
    <property type="evidence" value="ECO:0000314"/>
    <property type="project" value="RGD"/>
</dbReference>
<dbReference type="GO" id="GO:0015389">
    <property type="term" value="F:pyrimidine- and adenosine-specific:sodium symporter activity"/>
    <property type="evidence" value="ECO:0000314"/>
    <property type="project" value="UniProtKB"/>
</dbReference>
<dbReference type="GO" id="GO:0015213">
    <property type="term" value="F:uridine transmembrane transporter activity"/>
    <property type="evidence" value="ECO:0000266"/>
    <property type="project" value="RGD"/>
</dbReference>
<dbReference type="GO" id="GO:0045117">
    <property type="term" value="P:azole transmembrane transport"/>
    <property type="evidence" value="ECO:0000266"/>
    <property type="project" value="RGD"/>
</dbReference>
<dbReference type="GO" id="GO:0015861">
    <property type="term" value="P:cytidine transport"/>
    <property type="evidence" value="ECO:0000250"/>
    <property type="project" value="UniProtKB"/>
</dbReference>
<dbReference type="GO" id="GO:0180015">
    <property type="term" value="P:nucleoside import across plasma membrane"/>
    <property type="evidence" value="ECO:0000250"/>
    <property type="project" value="UniProtKB"/>
</dbReference>
<dbReference type="GO" id="GO:1901642">
    <property type="term" value="P:nucleoside transmembrane transport"/>
    <property type="evidence" value="ECO:0000266"/>
    <property type="project" value="RGD"/>
</dbReference>
<dbReference type="GO" id="GO:0015855">
    <property type="term" value="P:pyrimidine nucleobase transport"/>
    <property type="evidence" value="ECO:0000314"/>
    <property type="project" value="RGD"/>
</dbReference>
<dbReference type="GO" id="GO:0072531">
    <property type="term" value="P:pyrimidine-containing compound transmembrane transport"/>
    <property type="evidence" value="ECO:0000266"/>
    <property type="project" value="RGD"/>
</dbReference>
<dbReference type="GO" id="GO:0015862">
    <property type="term" value="P:uridine transmembrane transport"/>
    <property type="evidence" value="ECO:0000250"/>
    <property type="project" value="UniProtKB"/>
</dbReference>
<dbReference type="InterPro" id="IPR008276">
    <property type="entry name" value="C_nuclsd_transpt"/>
</dbReference>
<dbReference type="InterPro" id="IPR018270">
    <property type="entry name" value="C_nuclsd_transpt_met_bac"/>
</dbReference>
<dbReference type="InterPro" id="IPR011657">
    <property type="entry name" value="CNT_C_dom"/>
</dbReference>
<dbReference type="InterPro" id="IPR002668">
    <property type="entry name" value="CNT_N_dom"/>
</dbReference>
<dbReference type="InterPro" id="IPR011642">
    <property type="entry name" value="Gate_dom"/>
</dbReference>
<dbReference type="NCBIfam" id="TIGR00804">
    <property type="entry name" value="nupC"/>
    <property type="match status" value="1"/>
</dbReference>
<dbReference type="PANTHER" id="PTHR10590">
    <property type="entry name" value="SODIUM/NUCLEOSIDE COTRANSPORTER"/>
    <property type="match status" value="1"/>
</dbReference>
<dbReference type="PANTHER" id="PTHR10590:SF16">
    <property type="entry name" value="SODIUM_NUCLEOSIDE COTRANSPORTER 1"/>
    <property type="match status" value="1"/>
</dbReference>
<dbReference type="Pfam" id="PF07670">
    <property type="entry name" value="Gate"/>
    <property type="match status" value="1"/>
</dbReference>
<dbReference type="Pfam" id="PF07662">
    <property type="entry name" value="Nucleos_tra2_C"/>
    <property type="match status" value="1"/>
</dbReference>
<dbReference type="Pfam" id="PF01773">
    <property type="entry name" value="Nucleos_tra2_N"/>
    <property type="match status" value="1"/>
</dbReference>